<accession>B0RUI8</accession>
<evidence type="ECO:0000255" key="1">
    <source>
        <dbReference type="HAMAP-Rule" id="MF_01147"/>
    </source>
</evidence>
<name>LGT_XANCB</name>
<reference key="1">
    <citation type="journal article" date="2008" name="J. Biotechnol.">
        <title>The genome of Xanthomonas campestris pv. campestris B100 and its use for the reconstruction of metabolic pathways involved in xanthan biosynthesis.</title>
        <authorList>
            <person name="Vorhoelter F.-J."/>
            <person name="Schneiker S."/>
            <person name="Goesmann A."/>
            <person name="Krause L."/>
            <person name="Bekel T."/>
            <person name="Kaiser O."/>
            <person name="Linke B."/>
            <person name="Patschkowski T."/>
            <person name="Rueckert C."/>
            <person name="Schmid J."/>
            <person name="Sidhu V.K."/>
            <person name="Sieber V."/>
            <person name="Tauch A."/>
            <person name="Watt S.A."/>
            <person name="Weisshaar B."/>
            <person name="Becker A."/>
            <person name="Niehaus K."/>
            <person name="Puehler A."/>
        </authorList>
    </citation>
    <scope>NUCLEOTIDE SEQUENCE [LARGE SCALE GENOMIC DNA]</scope>
    <source>
        <strain>B100</strain>
    </source>
</reference>
<gene>
    <name evidence="1" type="primary">lgt</name>
    <name type="ordered locus">xcc-b100_3565</name>
</gene>
<keyword id="KW-0997">Cell inner membrane</keyword>
<keyword id="KW-1003">Cell membrane</keyword>
<keyword id="KW-0472">Membrane</keyword>
<keyword id="KW-0808">Transferase</keyword>
<keyword id="KW-0812">Transmembrane</keyword>
<keyword id="KW-1133">Transmembrane helix</keyword>
<proteinExistence type="inferred from homology"/>
<dbReference type="EC" id="2.5.1.145" evidence="1"/>
<dbReference type="EMBL" id="AM920689">
    <property type="protein sequence ID" value="CAP52930.1"/>
    <property type="molecule type" value="Genomic_DNA"/>
</dbReference>
<dbReference type="SMR" id="B0RUI8"/>
<dbReference type="KEGG" id="xca:xcc-b100_3565"/>
<dbReference type="HOGENOM" id="CLU_013386_1_0_6"/>
<dbReference type="UniPathway" id="UPA00664"/>
<dbReference type="Proteomes" id="UP000001188">
    <property type="component" value="Chromosome"/>
</dbReference>
<dbReference type="GO" id="GO:0005886">
    <property type="term" value="C:plasma membrane"/>
    <property type="evidence" value="ECO:0007669"/>
    <property type="project" value="UniProtKB-SubCell"/>
</dbReference>
<dbReference type="GO" id="GO:0008961">
    <property type="term" value="F:phosphatidylglycerol-prolipoprotein diacylglyceryl transferase activity"/>
    <property type="evidence" value="ECO:0007669"/>
    <property type="project" value="UniProtKB-UniRule"/>
</dbReference>
<dbReference type="GO" id="GO:0042158">
    <property type="term" value="P:lipoprotein biosynthetic process"/>
    <property type="evidence" value="ECO:0007669"/>
    <property type="project" value="UniProtKB-UniRule"/>
</dbReference>
<dbReference type="HAMAP" id="MF_01147">
    <property type="entry name" value="Lgt"/>
    <property type="match status" value="1"/>
</dbReference>
<dbReference type="InterPro" id="IPR001640">
    <property type="entry name" value="Lgt"/>
</dbReference>
<dbReference type="NCBIfam" id="TIGR00544">
    <property type="entry name" value="lgt"/>
    <property type="match status" value="1"/>
</dbReference>
<dbReference type="PANTHER" id="PTHR30589:SF0">
    <property type="entry name" value="PHOSPHATIDYLGLYCEROL--PROLIPOPROTEIN DIACYLGLYCERYL TRANSFERASE"/>
    <property type="match status" value="1"/>
</dbReference>
<dbReference type="PANTHER" id="PTHR30589">
    <property type="entry name" value="PROLIPOPROTEIN DIACYLGLYCERYL TRANSFERASE"/>
    <property type="match status" value="1"/>
</dbReference>
<dbReference type="Pfam" id="PF01790">
    <property type="entry name" value="LGT"/>
    <property type="match status" value="1"/>
</dbReference>
<dbReference type="PROSITE" id="PS01311">
    <property type="entry name" value="LGT"/>
    <property type="match status" value="1"/>
</dbReference>
<sequence>MIYLHAIDPIAFSLGPVQVHWYGLMYLAAFFSAWALGRSRILRGRLPGVDMDGFSDLLFYGMLGVVLGGRIGYMLFYAFDTFLANPLILFKVWEGGMSFHGGLLGVLIACGLWTRRHRLHFFDVMDFVAPLVPLGLGFGRLGNFVGGELWGKFTQAGWGVIFPHAPELADWPPAQLQAQYAAGALDRFARHPSQLYEAALEGVVMFVVLWTFSMKPRARYAVSGLFALLYGVFRFIVEFVRVPDAPLGYLAFNWLTMGQILSLPLIGVGLVLLALSRRAPVLQPVVPAAAGVEAAK</sequence>
<protein>
    <recommendedName>
        <fullName evidence="1">Phosphatidylglycerol--prolipoprotein diacylglyceryl transferase</fullName>
        <ecNumber evidence="1">2.5.1.145</ecNumber>
    </recommendedName>
</protein>
<feature type="chain" id="PRO_1000137472" description="Phosphatidylglycerol--prolipoprotein diacylglyceryl transferase">
    <location>
        <begin position="1"/>
        <end position="296"/>
    </location>
</feature>
<feature type="transmembrane region" description="Helical" evidence="1">
    <location>
        <begin position="10"/>
        <end position="30"/>
    </location>
</feature>
<feature type="transmembrane region" description="Helical" evidence="1">
    <location>
        <begin position="57"/>
        <end position="77"/>
    </location>
</feature>
<feature type="transmembrane region" description="Helical" evidence="1">
    <location>
        <begin position="92"/>
        <end position="112"/>
    </location>
</feature>
<feature type="transmembrane region" description="Helical" evidence="1">
    <location>
        <begin position="119"/>
        <end position="139"/>
    </location>
</feature>
<feature type="transmembrane region" description="Helical" evidence="1">
    <location>
        <begin position="194"/>
        <end position="214"/>
    </location>
</feature>
<feature type="transmembrane region" description="Helical" evidence="1">
    <location>
        <begin position="220"/>
        <end position="240"/>
    </location>
</feature>
<feature type="transmembrane region" description="Helical" evidence="1">
    <location>
        <begin position="255"/>
        <end position="275"/>
    </location>
</feature>
<feature type="binding site" evidence="1">
    <location>
        <position position="140"/>
    </location>
    <ligand>
        <name>a 1,2-diacyl-sn-glycero-3-phospho-(1'-sn-glycerol)</name>
        <dbReference type="ChEBI" id="CHEBI:64716"/>
    </ligand>
</feature>
<organism>
    <name type="scientific">Xanthomonas campestris pv. campestris (strain B100)</name>
    <dbReference type="NCBI Taxonomy" id="509169"/>
    <lineage>
        <taxon>Bacteria</taxon>
        <taxon>Pseudomonadati</taxon>
        <taxon>Pseudomonadota</taxon>
        <taxon>Gammaproteobacteria</taxon>
        <taxon>Lysobacterales</taxon>
        <taxon>Lysobacteraceae</taxon>
        <taxon>Xanthomonas</taxon>
    </lineage>
</organism>
<comment type="function">
    <text evidence="1">Catalyzes the transfer of the diacylglyceryl group from phosphatidylglycerol to the sulfhydryl group of the N-terminal cysteine of a prolipoprotein, the first step in the formation of mature lipoproteins.</text>
</comment>
<comment type="catalytic activity">
    <reaction evidence="1">
        <text>L-cysteinyl-[prolipoprotein] + a 1,2-diacyl-sn-glycero-3-phospho-(1'-sn-glycerol) = an S-1,2-diacyl-sn-glyceryl-L-cysteinyl-[prolipoprotein] + sn-glycerol 1-phosphate + H(+)</text>
        <dbReference type="Rhea" id="RHEA:56712"/>
        <dbReference type="Rhea" id="RHEA-COMP:14679"/>
        <dbReference type="Rhea" id="RHEA-COMP:14680"/>
        <dbReference type="ChEBI" id="CHEBI:15378"/>
        <dbReference type="ChEBI" id="CHEBI:29950"/>
        <dbReference type="ChEBI" id="CHEBI:57685"/>
        <dbReference type="ChEBI" id="CHEBI:64716"/>
        <dbReference type="ChEBI" id="CHEBI:140658"/>
        <dbReference type="EC" id="2.5.1.145"/>
    </reaction>
</comment>
<comment type="pathway">
    <text evidence="1">Protein modification; lipoprotein biosynthesis (diacylglyceryl transfer).</text>
</comment>
<comment type="subcellular location">
    <subcellularLocation>
        <location evidence="1">Cell inner membrane</location>
        <topology evidence="1">Multi-pass membrane protein</topology>
    </subcellularLocation>
</comment>
<comment type="similarity">
    <text evidence="1">Belongs to the Lgt family.</text>
</comment>